<accession>A9MFN5</accession>
<sequence>MGNNVVVLGTQWGDEGKGKIVDLLTERAKYVVRYQGGHNAGHTLVINGEKTVLHLIPSGILRENVISIIGNGVVLSPSALMKEMQELEDRGIPVRERLLLSEACPLILDYHVALDNAREKARGAKAIGTTGRGIGPAYEDKVARRGLRVGDLFDKATFAEKLKEVMEYHNFQLVNFYKVDAVDYQKVLDDVMAIADILTGMVVDVSDLLDQARKRGDFVMFEGAQGTLLDIDHGTYPYVTSSNTTAGGVATGSGLGPRYVDYVLGIIKAYSTRVGAGPFPTELFDETGEFLCKQGNEYGATTGRRRRTGWLDSVAIRRAVQINSLSGFCLTKLDVLDGLKEVKICVAYRMPDGREVTTTPLAADDWQGIEPIYETMPGWSESTFGVKDRSGLPAAALNYIKRIEELTGVPIDIISTGPDRTETMILRDPFDA</sequence>
<feature type="chain" id="PRO_1000073958" description="Adenylosuccinate synthetase">
    <location>
        <begin position="1"/>
        <end position="432"/>
    </location>
</feature>
<feature type="active site" description="Proton acceptor" evidence="1">
    <location>
        <position position="14"/>
    </location>
</feature>
<feature type="active site" description="Proton donor" evidence="1">
    <location>
        <position position="42"/>
    </location>
</feature>
<feature type="binding site" evidence="1">
    <location>
        <begin position="13"/>
        <end position="19"/>
    </location>
    <ligand>
        <name>GTP</name>
        <dbReference type="ChEBI" id="CHEBI:37565"/>
    </ligand>
</feature>
<feature type="binding site" description="in other chain" evidence="1">
    <location>
        <begin position="14"/>
        <end position="17"/>
    </location>
    <ligand>
        <name>IMP</name>
        <dbReference type="ChEBI" id="CHEBI:58053"/>
        <note>ligand shared between dimeric partners</note>
    </ligand>
</feature>
<feature type="binding site" evidence="1">
    <location>
        <position position="14"/>
    </location>
    <ligand>
        <name>Mg(2+)</name>
        <dbReference type="ChEBI" id="CHEBI:18420"/>
    </ligand>
</feature>
<feature type="binding site" description="in other chain" evidence="1">
    <location>
        <begin position="39"/>
        <end position="42"/>
    </location>
    <ligand>
        <name>IMP</name>
        <dbReference type="ChEBI" id="CHEBI:58053"/>
        <note>ligand shared between dimeric partners</note>
    </ligand>
</feature>
<feature type="binding site" evidence="1">
    <location>
        <begin position="41"/>
        <end position="43"/>
    </location>
    <ligand>
        <name>GTP</name>
        <dbReference type="ChEBI" id="CHEBI:37565"/>
    </ligand>
</feature>
<feature type="binding site" evidence="1">
    <location>
        <position position="41"/>
    </location>
    <ligand>
        <name>Mg(2+)</name>
        <dbReference type="ChEBI" id="CHEBI:18420"/>
    </ligand>
</feature>
<feature type="binding site" description="in other chain" evidence="1">
    <location>
        <position position="130"/>
    </location>
    <ligand>
        <name>IMP</name>
        <dbReference type="ChEBI" id="CHEBI:58053"/>
        <note>ligand shared between dimeric partners</note>
    </ligand>
</feature>
<feature type="binding site" evidence="1">
    <location>
        <position position="144"/>
    </location>
    <ligand>
        <name>IMP</name>
        <dbReference type="ChEBI" id="CHEBI:58053"/>
        <note>ligand shared between dimeric partners</note>
    </ligand>
</feature>
<feature type="binding site" description="in other chain" evidence="1">
    <location>
        <position position="225"/>
    </location>
    <ligand>
        <name>IMP</name>
        <dbReference type="ChEBI" id="CHEBI:58053"/>
        <note>ligand shared between dimeric partners</note>
    </ligand>
</feature>
<feature type="binding site" description="in other chain" evidence="1">
    <location>
        <position position="240"/>
    </location>
    <ligand>
        <name>IMP</name>
        <dbReference type="ChEBI" id="CHEBI:58053"/>
        <note>ligand shared between dimeric partners</note>
    </ligand>
</feature>
<feature type="binding site" evidence="1">
    <location>
        <begin position="300"/>
        <end position="306"/>
    </location>
    <ligand>
        <name>substrate</name>
    </ligand>
</feature>
<feature type="binding site" description="in other chain" evidence="1">
    <location>
        <position position="304"/>
    </location>
    <ligand>
        <name>IMP</name>
        <dbReference type="ChEBI" id="CHEBI:58053"/>
        <note>ligand shared between dimeric partners</note>
    </ligand>
</feature>
<feature type="binding site" evidence="1">
    <location>
        <position position="306"/>
    </location>
    <ligand>
        <name>GTP</name>
        <dbReference type="ChEBI" id="CHEBI:37565"/>
    </ligand>
</feature>
<feature type="binding site" evidence="1">
    <location>
        <begin position="332"/>
        <end position="334"/>
    </location>
    <ligand>
        <name>GTP</name>
        <dbReference type="ChEBI" id="CHEBI:37565"/>
    </ligand>
</feature>
<feature type="binding site" evidence="1">
    <location>
        <begin position="415"/>
        <end position="417"/>
    </location>
    <ligand>
        <name>GTP</name>
        <dbReference type="ChEBI" id="CHEBI:37565"/>
    </ligand>
</feature>
<name>PURA_SALAR</name>
<proteinExistence type="inferred from homology"/>
<protein>
    <recommendedName>
        <fullName evidence="1">Adenylosuccinate synthetase</fullName>
        <shortName evidence="1">AMPSase</shortName>
        <shortName evidence="1">AdSS</shortName>
        <ecNumber evidence="1">6.3.4.4</ecNumber>
    </recommendedName>
    <alternativeName>
        <fullName evidence="1">IMP--aspartate ligase</fullName>
    </alternativeName>
</protein>
<keyword id="KW-0963">Cytoplasm</keyword>
<keyword id="KW-0342">GTP-binding</keyword>
<keyword id="KW-0436">Ligase</keyword>
<keyword id="KW-0460">Magnesium</keyword>
<keyword id="KW-0479">Metal-binding</keyword>
<keyword id="KW-0547">Nucleotide-binding</keyword>
<keyword id="KW-0658">Purine biosynthesis</keyword>
<keyword id="KW-1185">Reference proteome</keyword>
<evidence type="ECO:0000255" key="1">
    <source>
        <dbReference type="HAMAP-Rule" id="MF_00011"/>
    </source>
</evidence>
<gene>
    <name evidence="1" type="primary">purA</name>
    <name type="ordered locus">SARI_03265</name>
</gene>
<comment type="function">
    <text evidence="1">Plays an important role in the de novo pathway of purine nucleotide biosynthesis. Catalyzes the first committed step in the biosynthesis of AMP from IMP.</text>
</comment>
<comment type="catalytic activity">
    <reaction evidence="1">
        <text>IMP + L-aspartate + GTP = N(6)-(1,2-dicarboxyethyl)-AMP + GDP + phosphate + 2 H(+)</text>
        <dbReference type="Rhea" id="RHEA:15753"/>
        <dbReference type="ChEBI" id="CHEBI:15378"/>
        <dbReference type="ChEBI" id="CHEBI:29991"/>
        <dbReference type="ChEBI" id="CHEBI:37565"/>
        <dbReference type="ChEBI" id="CHEBI:43474"/>
        <dbReference type="ChEBI" id="CHEBI:57567"/>
        <dbReference type="ChEBI" id="CHEBI:58053"/>
        <dbReference type="ChEBI" id="CHEBI:58189"/>
        <dbReference type="EC" id="6.3.4.4"/>
    </reaction>
</comment>
<comment type="cofactor">
    <cofactor evidence="1">
        <name>Mg(2+)</name>
        <dbReference type="ChEBI" id="CHEBI:18420"/>
    </cofactor>
    <text evidence="1">Binds 1 Mg(2+) ion per subunit.</text>
</comment>
<comment type="pathway">
    <text evidence="1">Purine metabolism; AMP biosynthesis via de novo pathway; AMP from IMP: step 1/2.</text>
</comment>
<comment type="subunit">
    <text evidence="1">Homodimer.</text>
</comment>
<comment type="subcellular location">
    <subcellularLocation>
        <location evidence="1">Cytoplasm</location>
    </subcellularLocation>
</comment>
<comment type="similarity">
    <text evidence="1">Belongs to the adenylosuccinate synthetase family.</text>
</comment>
<organism>
    <name type="scientific">Salmonella arizonae (strain ATCC BAA-731 / CDC346-86 / RSK2980)</name>
    <dbReference type="NCBI Taxonomy" id="41514"/>
    <lineage>
        <taxon>Bacteria</taxon>
        <taxon>Pseudomonadati</taxon>
        <taxon>Pseudomonadota</taxon>
        <taxon>Gammaproteobacteria</taxon>
        <taxon>Enterobacterales</taxon>
        <taxon>Enterobacteriaceae</taxon>
        <taxon>Salmonella</taxon>
    </lineage>
</organism>
<reference key="1">
    <citation type="submission" date="2007-11" db="EMBL/GenBank/DDBJ databases">
        <authorList>
            <consortium name="The Salmonella enterica serovar Arizonae Genome Sequencing Project"/>
            <person name="McClelland M."/>
            <person name="Sanderson E.K."/>
            <person name="Porwollik S."/>
            <person name="Spieth J."/>
            <person name="Clifton W.S."/>
            <person name="Fulton R."/>
            <person name="Chunyan W."/>
            <person name="Wollam A."/>
            <person name="Shah N."/>
            <person name="Pepin K."/>
            <person name="Bhonagiri V."/>
            <person name="Nash W."/>
            <person name="Johnson M."/>
            <person name="Thiruvilangam P."/>
            <person name="Wilson R."/>
        </authorList>
    </citation>
    <scope>NUCLEOTIDE SEQUENCE [LARGE SCALE GENOMIC DNA]</scope>
    <source>
        <strain>ATCC BAA-731 / CDC346-86 / RSK2980</strain>
    </source>
</reference>
<dbReference type="EC" id="6.3.4.4" evidence="1"/>
<dbReference type="EMBL" id="CP000880">
    <property type="protein sequence ID" value="ABX23101.1"/>
    <property type="molecule type" value="Genomic_DNA"/>
</dbReference>
<dbReference type="SMR" id="A9MFN5"/>
<dbReference type="STRING" id="41514.SARI_03265"/>
<dbReference type="KEGG" id="ses:SARI_03265"/>
<dbReference type="HOGENOM" id="CLU_029848_0_0_6"/>
<dbReference type="UniPathway" id="UPA00075">
    <property type="reaction ID" value="UER00335"/>
</dbReference>
<dbReference type="Proteomes" id="UP000002084">
    <property type="component" value="Chromosome"/>
</dbReference>
<dbReference type="GO" id="GO:0005737">
    <property type="term" value="C:cytoplasm"/>
    <property type="evidence" value="ECO:0007669"/>
    <property type="project" value="UniProtKB-SubCell"/>
</dbReference>
<dbReference type="GO" id="GO:0004019">
    <property type="term" value="F:adenylosuccinate synthase activity"/>
    <property type="evidence" value="ECO:0007669"/>
    <property type="project" value="UniProtKB-UniRule"/>
</dbReference>
<dbReference type="GO" id="GO:0005525">
    <property type="term" value="F:GTP binding"/>
    <property type="evidence" value="ECO:0007669"/>
    <property type="project" value="UniProtKB-UniRule"/>
</dbReference>
<dbReference type="GO" id="GO:0000287">
    <property type="term" value="F:magnesium ion binding"/>
    <property type="evidence" value="ECO:0007669"/>
    <property type="project" value="UniProtKB-UniRule"/>
</dbReference>
<dbReference type="GO" id="GO:0044208">
    <property type="term" value="P:'de novo' AMP biosynthetic process"/>
    <property type="evidence" value="ECO:0007669"/>
    <property type="project" value="UniProtKB-UniRule"/>
</dbReference>
<dbReference type="GO" id="GO:0046040">
    <property type="term" value="P:IMP metabolic process"/>
    <property type="evidence" value="ECO:0007669"/>
    <property type="project" value="TreeGrafter"/>
</dbReference>
<dbReference type="CDD" id="cd03108">
    <property type="entry name" value="AdSS"/>
    <property type="match status" value="1"/>
</dbReference>
<dbReference type="FunFam" id="1.10.300.10:FF:000001">
    <property type="entry name" value="Adenylosuccinate synthetase"/>
    <property type="match status" value="1"/>
</dbReference>
<dbReference type="FunFam" id="3.90.170.10:FF:000001">
    <property type="entry name" value="Adenylosuccinate synthetase"/>
    <property type="match status" value="1"/>
</dbReference>
<dbReference type="Gene3D" id="3.40.440.10">
    <property type="entry name" value="Adenylosuccinate Synthetase, subunit A, domain 1"/>
    <property type="match status" value="1"/>
</dbReference>
<dbReference type="Gene3D" id="1.10.300.10">
    <property type="entry name" value="Adenylosuccinate Synthetase, subunit A, domain 2"/>
    <property type="match status" value="1"/>
</dbReference>
<dbReference type="Gene3D" id="3.90.170.10">
    <property type="entry name" value="Adenylosuccinate Synthetase, subunit A, domain 3"/>
    <property type="match status" value="1"/>
</dbReference>
<dbReference type="HAMAP" id="MF_00011">
    <property type="entry name" value="Adenylosucc_synth"/>
    <property type="match status" value="1"/>
</dbReference>
<dbReference type="InterPro" id="IPR018220">
    <property type="entry name" value="Adenylosuccin_syn_GTP-bd"/>
</dbReference>
<dbReference type="InterPro" id="IPR033128">
    <property type="entry name" value="Adenylosuccin_syn_Lys_AS"/>
</dbReference>
<dbReference type="InterPro" id="IPR042109">
    <property type="entry name" value="Adenylosuccinate_synth_dom1"/>
</dbReference>
<dbReference type="InterPro" id="IPR042110">
    <property type="entry name" value="Adenylosuccinate_synth_dom2"/>
</dbReference>
<dbReference type="InterPro" id="IPR042111">
    <property type="entry name" value="Adenylosuccinate_synth_dom3"/>
</dbReference>
<dbReference type="InterPro" id="IPR001114">
    <property type="entry name" value="Adenylosuccinate_synthetase"/>
</dbReference>
<dbReference type="InterPro" id="IPR027417">
    <property type="entry name" value="P-loop_NTPase"/>
</dbReference>
<dbReference type="NCBIfam" id="NF002223">
    <property type="entry name" value="PRK01117.1"/>
    <property type="match status" value="1"/>
</dbReference>
<dbReference type="NCBIfam" id="TIGR00184">
    <property type="entry name" value="purA"/>
    <property type="match status" value="1"/>
</dbReference>
<dbReference type="PANTHER" id="PTHR11846">
    <property type="entry name" value="ADENYLOSUCCINATE SYNTHETASE"/>
    <property type="match status" value="1"/>
</dbReference>
<dbReference type="PANTHER" id="PTHR11846:SF0">
    <property type="entry name" value="ADENYLOSUCCINATE SYNTHETASE"/>
    <property type="match status" value="1"/>
</dbReference>
<dbReference type="Pfam" id="PF00709">
    <property type="entry name" value="Adenylsucc_synt"/>
    <property type="match status" value="1"/>
</dbReference>
<dbReference type="SMART" id="SM00788">
    <property type="entry name" value="Adenylsucc_synt"/>
    <property type="match status" value="1"/>
</dbReference>
<dbReference type="SUPFAM" id="SSF52540">
    <property type="entry name" value="P-loop containing nucleoside triphosphate hydrolases"/>
    <property type="match status" value="1"/>
</dbReference>
<dbReference type="PROSITE" id="PS01266">
    <property type="entry name" value="ADENYLOSUCCIN_SYN_1"/>
    <property type="match status" value="1"/>
</dbReference>
<dbReference type="PROSITE" id="PS00513">
    <property type="entry name" value="ADENYLOSUCCIN_SYN_2"/>
    <property type="match status" value="1"/>
</dbReference>